<proteinExistence type="inferred from homology"/>
<keyword id="KW-0028">Amino-acid biosynthesis</keyword>
<keyword id="KW-0963">Cytoplasm</keyword>
<keyword id="KW-0413">Isomerase</keyword>
<keyword id="KW-0457">Lysine biosynthesis</keyword>
<keyword id="KW-1185">Reference proteome</keyword>
<protein>
    <recommendedName>
        <fullName evidence="1">Diaminopimelate epimerase</fullName>
        <shortName evidence="1">DAP epimerase</shortName>
        <ecNumber evidence="1">5.1.1.7</ecNumber>
    </recommendedName>
    <alternativeName>
        <fullName evidence="1">PLP-independent amino acid racemase</fullName>
    </alternativeName>
</protein>
<organism>
    <name type="scientific">Picosynechococcus sp. (strain ATCC 27264 / PCC 7002 / PR-6)</name>
    <name type="common">Agmenellum quadruplicatum</name>
    <dbReference type="NCBI Taxonomy" id="32049"/>
    <lineage>
        <taxon>Bacteria</taxon>
        <taxon>Bacillati</taxon>
        <taxon>Cyanobacteriota</taxon>
        <taxon>Cyanophyceae</taxon>
        <taxon>Oscillatoriophycideae</taxon>
        <taxon>Chroococcales</taxon>
        <taxon>Geminocystaceae</taxon>
        <taxon>Picosynechococcus</taxon>
    </lineage>
</organism>
<comment type="function">
    <text evidence="1">Catalyzes the stereoinversion of LL-2,6-diaminopimelate (L,L-DAP) to meso-diaminopimelate (meso-DAP), a precursor of L-lysine and an essential component of the bacterial peptidoglycan.</text>
</comment>
<comment type="catalytic activity">
    <reaction evidence="1">
        <text>(2S,6S)-2,6-diaminopimelate = meso-2,6-diaminopimelate</text>
        <dbReference type="Rhea" id="RHEA:15393"/>
        <dbReference type="ChEBI" id="CHEBI:57609"/>
        <dbReference type="ChEBI" id="CHEBI:57791"/>
        <dbReference type="EC" id="5.1.1.7"/>
    </reaction>
</comment>
<comment type="pathway">
    <text evidence="1">Amino-acid biosynthesis; L-lysine biosynthesis via DAP pathway; DL-2,6-diaminopimelate from LL-2,6-diaminopimelate: step 1/1.</text>
</comment>
<comment type="subunit">
    <text evidence="1">Homodimer.</text>
</comment>
<comment type="subcellular location">
    <subcellularLocation>
        <location evidence="1">Cytoplasm</location>
    </subcellularLocation>
</comment>
<comment type="similarity">
    <text evidence="1">Belongs to the diaminopimelate epimerase family.</text>
</comment>
<gene>
    <name evidence="1" type="primary">dapF</name>
    <name type="ordered locus">SYNPCC7002_A1642</name>
</gene>
<accession>B1XP39</accession>
<dbReference type="EC" id="5.1.1.7" evidence="1"/>
<dbReference type="EMBL" id="CP000951">
    <property type="protein sequence ID" value="ACA99632.1"/>
    <property type="molecule type" value="Genomic_DNA"/>
</dbReference>
<dbReference type="RefSeq" id="WP_012307255.1">
    <property type="nucleotide sequence ID" value="NZ_JAHHPU010000002.1"/>
</dbReference>
<dbReference type="SMR" id="B1XP39"/>
<dbReference type="STRING" id="32049.SYNPCC7002_A1642"/>
<dbReference type="KEGG" id="syp:SYNPCC7002_A1642"/>
<dbReference type="eggNOG" id="COG0253">
    <property type="taxonomic scope" value="Bacteria"/>
</dbReference>
<dbReference type="HOGENOM" id="CLU_053306_2_1_3"/>
<dbReference type="UniPathway" id="UPA00034">
    <property type="reaction ID" value="UER00025"/>
</dbReference>
<dbReference type="Proteomes" id="UP000001688">
    <property type="component" value="Chromosome"/>
</dbReference>
<dbReference type="GO" id="GO:0005829">
    <property type="term" value="C:cytosol"/>
    <property type="evidence" value="ECO:0007669"/>
    <property type="project" value="TreeGrafter"/>
</dbReference>
<dbReference type="GO" id="GO:0008837">
    <property type="term" value="F:diaminopimelate epimerase activity"/>
    <property type="evidence" value="ECO:0007669"/>
    <property type="project" value="UniProtKB-UniRule"/>
</dbReference>
<dbReference type="GO" id="GO:0009089">
    <property type="term" value="P:lysine biosynthetic process via diaminopimelate"/>
    <property type="evidence" value="ECO:0007669"/>
    <property type="project" value="UniProtKB-UniRule"/>
</dbReference>
<dbReference type="FunFam" id="3.10.310.10:FF:000009">
    <property type="entry name" value="Diaminopimelate epimerase chloroplastic"/>
    <property type="match status" value="1"/>
</dbReference>
<dbReference type="FunFam" id="3.10.310.10:FF:000011">
    <property type="entry name" value="Diaminopimelate epimerase, chloroplastic"/>
    <property type="match status" value="1"/>
</dbReference>
<dbReference type="Gene3D" id="3.10.310.10">
    <property type="entry name" value="Diaminopimelate Epimerase, Chain A, domain 1"/>
    <property type="match status" value="2"/>
</dbReference>
<dbReference type="HAMAP" id="MF_00197">
    <property type="entry name" value="DAP_epimerase"/>
    <property type="match status" value="1"/>
</dbReference>
<dbReference type="InterPro" id="IPR018510">
    <property type="entry name" value="DAP_epimerase_AS"/>
</dbReference>
<dbReference type="InterPro" id="IPR001653">
    <property type="entry name" value="DAP_epimerase_DapF"/>
</dbReference>
<dbReference type="NCBIfam" id="TIGR00652">
    <property type="entry name" value="DapF"/>
    <property type="match status" value="1"/>
</dbReference>
<dbReference type="PANTHER" id="PTHR31689:SF0">
    <property type="entry name" value="DIAMINOPIMELATE EPIMERASE"/>
    <property type="match status" value="1"/>
</dbReference>
<dbReference type="PANTHER" id="PTHR31689">
    <property type="entry name" value="DIAMINOPIMELATE EPIMERASE, CHLOROPLASTIC"/>
    <property type="match status" value="1"/>
</dbReference>
<dbReference type="Pfam" id="PF01678">
    <property type="entry name" value="DAP_epimerase"/>
    <property type="match status" value="2"/>
</dbReference>
<dbReference type="SUPFAM" id="SSF54506">
    <property type="entry name" value="Diaminopimelate epimerase-like"/>
    <property type="match status" value="2"/>
</dbReference>
<dbReference type="PROSITE" id="PS01326">
    <property type="entry name" value="DAP_EPIMERASE"/>
    <property type="match status" value="1"/>
</dbReference>
<feature type="chain" id="PRO_1000099269" description="Diaminopimelate epimerase">
    <location>
        <begin position="1"/>
        <end position="281"/>
    </location>
</feature>
<feature type="active site" description="Proton donor" evidence="1">
    <location>
        <position position="75"/>
    </location>
</feature>
<feature type="active site" description="Proton acceptor" evidence="1">
    <location>
        <position position="224"/>
    </location>
</feature>
<feature type="binding site" evidence="1">
    <location>
        <position position="13"/>
    </location>
    <ligand>
        <name>substrate</name>
    </ligand>
</feature>
<feature type="binding site" evidence="1">
    <location>
        <position position="66"/>
    </location>
    <ligand>
        <name>substrate</name>
    </ligand>
</feature>
<feature type="binding site" evidence="1">
    <location>
        <begin position="76"/>
        <end position="77"/>
    </location>
    <ligand>
        <name>substrate</name>
    </ligand>
</feature>
<feature type="binding site" evidence="1">
    <location>
        <position position="164"/>
    </location>
    <ligand>
        <name>substrate</name>
    </ligand>
</feature>
<feature type="binding site" evidence="1">
    <location>
        <position position="197"/>
    </location>
    <ligand>
        <name>substrate</name>
    </ligand>
</feature>
<feature type="binding site" evidence="1">
    <location>
        <begin position="215"/>
        <end position="216"/>
    </location>
    <ligand>
        <name>substrate</name>
    </ligand>
</feature>
<feature type="binding site" evidence="1">
    <location>
        <begin position="225"/>
        <end position="226"/>
    </location>
    <ligand>
        <name>substrate</name>
    </ligand>
</feature>
<feature type="site" description="Could be important to modulate the pK values of the two catalytic cysteine residues" evidence="1">
    <location>
        <position position="166"/>
    </location>
</feature>
<feature type="site" description="Could be important to modulate the pK values of the two catalytic cysteine residues" evidence="1">
    <location>
        <position position="215"/>
    </location>
</feature>
<reference key="1">
    <citation type="submission" date="2008-02" db="EMBL/GenBank/DDBJ databases">
        <title>Complete sequence of Synechococcus sp. PCC 7002.</title>
        <authorList>
            <person name="Li T."/>
            <person name="Zhao J."/>
            <person name="Zhao C."/>
            <person name="Liu Z."/>
            <person name="Zhao F."/>
            <person name="Marquardt J."/>
            <person name="Nomura C.T."/>
            <person name="Persson S."/>
            <person name="Detter J.C."/>
            <person name="Richardson P.M."/>
            <person name="Lanz C."/>
            <person name="Schuster S.C."/>
            <person name="Wang J."/>
            <person name="Li S."/>
            <person name="Huang X."/>
            <person name="Cai T."/>
            <person name="Yu Z."/>
            <person name="Luo J."/>
            <person name="Zhao J."/>
            <person name="Bryant D.A."/>
        </authorList>
    </citation>
    <scope>NUCLEOTIDE SEQUENCE [LARGE SCALE GENOMIC DNA]</scope>
    <source>
        <strain>ATCC 27264 / PCC 7002 / PR-6</strain>
    </source>
</reference>
<sequence length="281" mass="30364">MVLEFTKYQGLGNDFILLDNRQQTTPLVTPEQAIQLCDRHFGIGADGVIFALPGQAGADYTMRIFNSDGSEPEMCGNGIRCLARFIDHLEGGNAPGKTYSIHTLAGMIRPRLETDALVRVDMGEPILTATDIPTTLKDSNGQAVNQPLEVAGKTWMVTCVSMGNPHCITFVEDVAAIALEVIGKDFEHHPAFPQRINTEFIEVVRPDYIKMRVWERGAGITLACGTGACASVVAGVLTGHCDRLCTVELPGGCLQIEWSAADNHIYMTGPAAISFQGQVTL</sequence>
<evidence type="ECO:0000255" key="1">
    <source>
        <dbReference type="HAMAP-Rule" id="MF_00197"/>
    </source>
</evidence>
<name>DAPF_PICP2</name>